<sequence>MPVTMSRRAYAGMFGPTTGDKIRLADTELLIEVERDFTIYGEEVKFGGGKVIRDGMGQSQRSRAEGAVDTLITNVVILDHTGVVKADVGLKDGRIAAIGKGGNPDIQPGVTITIGPGTEIIAGEGKILTAGGVDTHIHFIAPQQIEEALCSGVTTMLGGGSGPAEGTKATTCTSGPWHMMRMMQAAESLPMNIGFFGKGNASKPAALIEMVEAGACGLKLHEDWGTTPAAIDCCLSVCDALDVQATLHSDTLNESGFVETTIAAFKGRTIHAFHTEGAGGGHAPDIIKVVGEQNVLPSSTNPTRPFTRNTLDEHLDMLMVCHHLDPHIAEDIAFAESRIRKETIAAEDILHDLGALSMFSSDSQAMGRVGEVVIRCWQTADKMKRQRGALPEDISGNDNFRARRYIAKYTINPAIAHGISHVVGSVEPGKLADLVLWSPAFFGVKPDLVLKGGSIAYALMGDANASIPTPQPVHYRPMFASFGRSLIESSLIFVSAVSIERGVGARYGLSRPLEAVRGTRGSISKKSMILNDATPVMEVDPETYEVRADGELLTCEPADVLPMAQRYFLF</sequence>
<keyword id="KW-0963">Cytoplasm</keyword>
<keyword id="KW-0378">Hydrolase</keyword>
<keyword id="KW-0479">Metal-binding</keyword>
<keyword id="KW-0533">Nickel</keyword>
<keyword id="KW-1185">Reference proteome</keyword>
<evidence type="ECO:0000255" key="1">
    <source>
        <dbReference type="HAMAP-Rule" id="MF_01953"/>
    </source>
</evidence>
<gene>
    <name evidence="1" type="primary">ureC</name>
    <name type="ordered locus">Msil_2011</name>
</gene>
<reference key="1">
    <citation type="journal article" date="2010" name="J. Bacteriol.">
        <title>Complete genome sequence of the aerobic facultative methanotroph Methylocella silvestris BL2.</title>
        <authorList>
            <person name="Chen Y."/>
            <person name="Crombie A."/>
            <person name="Rahman M.T."/>
            <person name="Dedysh S.N."/>
            <person name="Liesack W."/>
            <person name="Stott M.B."/>
            <person name="Alam M."/>
            <person name="Theisen A.R."/>
            <person name="Murrell J.C."/>
            <person name="Dunfield P.F."/>
        </authorList>
    </citation>
    <scope>NUCLEOTIDE SEQUENCE [LARGE SCALE GENOMIC DNA]</scope>
    <source>
        <strain>DSM 15510 / CIP 108128 / LMG 27833 / NCIMB 13906 / BL2</strain>
    </source>
</reference>
<comment type="catalytic activity">
    <reaction evidence="1">
        <text>urea + 2 H2O + H(+) = hydrogencarbonate + 2 NH4(+)</text>
        <dbReference type="Rhea" id="RHEA:20557"/>
        <dbReference type="ChEBI" id="CHEBI:15377"/>
        <dbReference type="ChEBI" id="CHEBI:15378"/>
        <dbReference type="ChEBI" id="CHEBI:16199"/>
        <dbReference type="ChEBI" id="CHEBI:17544"/>
        <dbReference type="ChEBI" id="CHEBI:28938"/>
        <dbReference type="EC" id="3.5.1.5"/>
    </reaction>
</comment>
<comment type="cofactor">
    <cofactor evidence="1">
        <name>Ni cation</name>
        <dbReference type="ChEBI" id="CHEBI:25516"/>
    </cofactor>
    <text evidence="1">Binds 2 nickel ions per subunit.</text>
</comment>
<comment type="pathway">
    <text evidence="1">Nitrogen metabolism; urea degradation; CO(2) and NH(3) from urea (urease route): step 1/1.</text>
</comment>
<comment type="subunit">
    <text evidence="1">Heterotrimer of UreA (gamma), UreB (beta) and UreC (alpha) subunits. Three heterotrimers associate to form the active enzyme.</text>
</comment>
<comment type="subcellular location">
    <subcellularLocation>
        <location evidence="1">Cytoplasm</location>
    </subcellularLocation>
</comment>
<comment type="PTM">
    <text evidence="1">Carboxylation allows a single lysine to coordinate two nickel ions.</text>
</comment>
<comment type="similarity">
    <text evidence="1">Belongs to the metallo-dependent hydrolases superfamily. Urease alpha subunit family.</text>
</comment>
<proteinExistence type="inferred from homology"/>
<organism>
    <name type="scientific">Methylocella silvestris (strain DSM 15510 / CIP 108128 / LMG 27833 / NCIMB 13906 / BL2)</name>
    <dbReference type="NCBI Taxonomy" id="395965"/>
    <lineage>
        <taxon>Bacteria</taxon>
        <taxon>Pseudomonadati</taxon>
        <taxon>Pseudomonadota</taxon>
        <taxon>Alphaproteobacteria</taxon>
        <taxon>Hyphomicrobiales</taxon>
        <taxon>Beijerinckiaceae</taxon>
        <taxon>Methylocella</taxon>
    </lineage>
</organism>
<dbReference type="EC" id="3.5.1.5" evidence="1"/>
<dbReference type="EMBL" id="CP001280">
    <property type="protein sequence ID" value="ACK50953.1"/>
    <property type="molecule type" value="Genomic_DNA"/>
</dbReference>
<dbReference type="RefSeq" id="WP_012591023.1">
    <property type="nucleotide sequence ID" value="NC_011666.1"/>
</dbReference>
<dbReference type="SMR" id="B8EPU9"/>
<dbReference type="STRING" id="395965.Msil_2011"/>
<dbReference type="MEROPS" id="M38.982"/>
<dbReference type="KEGG" id="msl:Msil_2011"/>
<dbReference type="eggNOG" id="COG0804">
    <property type="taxonomic scope" value="Bacteria"/>
</dbReference>
<dbReference type="HOGENOM" id="CLU_000980_0_0_5"/>
<dbReference type="OrthoDB" id="9802793at2"/>
<dbReference type="UniPathway" id="UPA00258">
    <property type="reaction ID" value="UER00370"/>
</dbReference>
<dbReference type="Proteomes" id="UP000002257">
    <property type="component" value="Chromosome"/>
</dbReference>
<dbReference type="GO" id="GO:0005737">
    <property type="term" value="C:cytoplasm"/>
    <property type="evidence" value="ECO:0007669"/>
    <property type="project" value="UniProtKB-SubCell"/>
</dbReference>
<dbReference type="GO" id="GO:0016151">
    <property type="term" value="F:nickel cation binding"/>
    <property type="evidence" value="ECO:0007669"/>
    <property type="project" value="UniProtKB-UniRule"/>
</dbReference>
<dbReference type="GO" id="GO:0009039">
    <property type="term" value="F:urease activity"/>
    <property type="evidence" value="ECO:0007669"/>
    <property type="project" value="UniProtKB-UniRule"/>
</dbReference>
<dbReference type="GO" id="GO:0043419">
    <property type="term" value="P:urea catabolic process"/>
    <property type="evidence" value="ECO:0007669"/>
    <property type="project" value="UniProtKB-UniRule"/>
</dbReference>
<dbReference type="CDD" id="cd00375">
    <property type="entry name" value="Urease_alpha"/>
    <property type="match status" value="1"/>
</dbReference>
<dbReference type="Gene3D" id="3.20.20.140">
    <property type="entry name" value="Metal-dependent hydrolases"/>
    <property type="match status" value="1"/>
</dbReference>
<dbReference type="Gene3D" id="2.30.40.10">
    <property type="entry name" value="Urease, subunit C, domain 1"/>
    <property type="match status" value="1"/>
</dbReference>
<dbReference type="HAMAP" id="MF_01953">
    <property type="entry name" value="Urease_alpha"/>
    <property type="match status" value="1"/>
</dbReference>
<dbReference type="InterPro" id="IPR006680">
    <property type="entry name" value="Amidohydro-rel"/>
</dbReference>
<dbReference type="InterPro" id="IPR011059">
    <property type="entry name" value="Metal-dep_hydrolase_composite"/>
</dbReference>
<dbReference type="InterPro" id="IPR032466">
    <property type="entry name" value="Metal_Hydrolase"/>
</dbReference>
<dbReference type="InterPro" id="IPR011612">
    <property type="entry name" value="Urease_alpha_N_dom"/>
</dbReference>
<dbReference type="InterPro" id="IPR050112">
    <property type="entry name" value="Urease_alpha_subunit"/>
</dbReference>
<dbReference type="InterPro" id="IPR017950">
    <property type="entry name" value="Urease_AS"/>
</dbReference>
<dbReference type="InterPro" id="IPR005848">
    <property type="entry name" value="Urease_asu"/>
</dbReference>
<dbReference type="InterPro" id="IPR017951">
    <property type="entry name" value="Urease_asu_c"/>
</dbReference>
<dbReference type="InterPro" id="IPR029754">
    <property type="entry name" value="Urease_Ni-bd"/>
</dbReference>
<dbReference type="NCBIfam" id="NF009685">
    <property type="entry name" value="PRK13206.1"/>
    <property type="match status" value="1"/>
</dbReference>
<dbReference type="NCBIfam" id="NF009686">
    <property type="entry name" value="PRK13207.1"/>
    <property type="match status" value="1"/>
</dbReference>
<dbReference type="NCBIfam" id="TIGR01792">
    <property type="entry name" value="urease_alph"/>
    <property type="match status" value="1"/>
</dbReference>
<dbReference type="PANTHER" id="PTHR43440">
    <property type="entry name" value="UREASE"/>
    <property type="match status" value="1"/>
</dbReference>
<dbReference type="PANTHER" id="PTHR43440:SF1">
    <property type="entry name" value="UREASE"/>
    <property type="match status" value="1"/>
</dbReference>
<dbReference type="Pfam" id="PF01979">
    <property type="entry name" value="Amidohydro_1"/>
    <property type="match status" value="1"/>
</dbReference>
<dbReference type="Pfam" id="PF00449">
    <property type="entry name" value="Urease_alpha"/>
    <property type="match status" value="1"/>
</dbReference>
<dbReference type="PRINTS" id="PR01752">
    <property type="entry name" value="UREASE"/>
</dbReference>
<dbReference type="SUPFAM" id="SSF51338">
    <property type="entry name" value="Composite domain of metallo-dependent hydrolases"/>
    <property type="match status" value="2"/>
</dbReference>
<dbReference type="SUPFAM" id="SSF51556">
    <property type="entry name" value="Metallo-dependent hydrolases"/>
    <property type="match status" value="1"/>
</dbReference>
<dbReference type="PROSITE" id="PS01120">
    <property type="entry name" value="UREASE_1"/>
    <property type="match status" value="1"/>
</dbReference>
<dbReference type="PROSITE" id="PS00145">
    <property type="entry name" value="UREASE_2"/>
    <property type="match status" value="1"/>
</dbReference>
<dbReference type="PROSITE" id="PS51368">
    <property type="entry name" value="UREASE_3"/>
    <property type="match status" value="1"/>
</dbReference>
<protein>
    <recommendedName>
        <fullName evidence="1">Urease subunit alpha</fullName>
        <ecNumber evidence="1">3.5.1.5</ecNumber>
    </recommendedName>
    <alternativeName>
        <fullName evidence="1">Urea amidohydrolase subunit alpha</fullName>
    </alternativeName>
</protein>
<accession>B8EPU9</accession>
<name>URE1_METSB</name>
<feature type="chain" id="PRO_1000188882" description="Urease subunit alpha">
    <location>
        <begin position="1"/>
        <end position="570"/>
    </location>
</feature>
<feature type="domain" description="Urease" evidence="1">
    <location>
        <begin position="131"/>
        <end position="570"/>
    </location>
</feature>
<feature type="active site" description="Proton donor" evidence="1">
    <location>
        <position position="322"/>
    </location>
</feature>
<feature type="binding site" evidence="1">
    <location>
        <position position="136"/>
    </location>
    <ligand>
        <name>Ni(2+)</name>
        <dbReference type="ChEBI" id="CHEBI:49786"/>
        <label>1</label>
    </ligand>
</feature>
<feature type="binding site" evidence="1">
    <location>
        <position position="138"/>
    </location>
    <ligand>
        <name>Ni(2+)</name>
        <dbReference type="ChEBI" id="CHEBI:49786"/>
        <label>1</label>
    </ligand>
</feature>
<feature type="binding site" description="via carbamate group" evidence="1">
    <location>
        <position position="219"/>
    </location>
    <ligand>
        <name>Ni(2+)</name>
        <dbReference type="ChEBI" id="CHEBI:49786"/>
        <label>1</label>
    </ligand>
</feature>
<feature type="binding site" description="via carbamate group" evidence="1">
    <location>
        <position position="219"/>
    </location>
    <ligand>
        <name>Ni(2+)</name>
        <dbReference type="ChEBI" id="CHEBI:49786"/>
        <label>2</label>
    </ligand>
</feature>
<feature type="binding site" evidence="1">
    <location>
        <position position="221"/>
    </location>
    <ligand>
        <name>substrate</name>
    </ligand>
</feature>
<feature type="binding site" evidence="1">
    <location>
        <position position="248"/>
    </location>
    <ligand>
        <name>Ni(2+)</name>
        <dbReference type="ChEBI" id="CHEBI:49786"/>
        <label>2</label>
    </ligand>
</feature>
<feature type="binding site" evidence="1">
    <location>
        <position position="274"/>
    </location>
    <ligand>
        <name>Ni(2+)</name>
        <dbReference type="ChEBI" id="CHEBI:49786"/>
        <label>2</label>
    </ligand>
</feature>
<feature type="binding site" evidence="1">
    <location>
        <position position="362"/>
    </location>
    <ligand>
        <name>Ni(2+)</name>
        <dbReference type="ChEBI" id="CHEBI:49786"/>
        <label>1</label>
    </ligand>
</feature>
<feature type="modified residue" description="N6-carboxylysine" evidence="1">
    <location>
        <position position="219"/>
    </location>
</feature>